<gene>
    <name type="primary">ZNF160</name>
    <name type="synonym">KIAA1611</name>
</gene>
<keyword id="KW-0025">Alternative splicing</keyword>
<keyword id="KW-0238">DNA-binding</keyword>
<keyword id="KW-1017">Isopeptide bond</keyword>
<keyword id="KW-0479">Metal-binding</keyword>
<keyword id="KW-0539">Nucleus</keyword>
<keyword id="KW-1267">Proteomics identification</keyword>
<keyword id="KW-1185">Reference proteome</keyword>
<keyword id="KW-0677">Repeat</keyword>
<keyword id="KW-0804">Transcription</keyword>
<keyword id="KW-0805">Transcription regulation</keyword>
<keyword id="KW-0832">Ubl conjugation</keyword>
<keyword id="KW-0862">Zinc</keyword>
<keyword id="KW-0863">Zinc-finger</keyword>
<feature type="chain" id="PRO_0000047433" description="Zinc finger protein 160">
    <location>
        <begin position="1"/>
        <end position="818"/>
    </location>
</feature>
<feature type="domain" description="KRAB" evidence="3">
    <location>
        <begin position="8"/>
        <end position="79"/>
    </location>
</feature>
<feature type="zinc finger region" description="C2H2-type 1" evidence="2">
    <location>
        <begin position="257"/>
        <end position="279"/>
    </location>
</feature>
<feature type="zinc finger region" description="C2H2-type 2" evidence="2">
    <location>
        <begin position="285"/>
        <end position="307"/>
    </location>
</feature>
<feature type="zinc finger region" description="C2H2-type 3" evidence="2">
    <location>
        <begin position="313"/>
        <end position="335"/>
    </location>
</feature>
<feature type="zinc finger region" description="C2H2-type 4" evidence="2">
    <location>
        <begin position="341"/>
        <end position="363"/>
    </location>
</feature>
<feature type="zinc finger region" description="C2H2-type 5" evidence="2">
    <location>
        <begin position="369"/>
        <end position="391"/>
    </location>
</feature>
<feature type="zinc finger region" description="C2H2-type 6" evidence="2">
    <location>
        <begin position="397"/>
        <end position="419"/>
    </location>
</feature>
<feature type="zinc finger region" description="C2H2-type 7" evidence="2">
    <location>
        <begin position="425"/>
        <end position="447"/>
    </location>
</feature>
<feature type="zinc finger region" description="C2H2-type 8" evidence="2">
    <location>
        <begin position="453"/>
        <end position="475"/>
    </location>
</feature>
<feature type="zinc finger region" description="C2H2-type 9" evidence="2">
    <location>
        <begin position="481"/>
        <end position="503"/>
    </location>
</feature>
<feature type="zinc finger region" description="C2H2-type 10" evidence="2">
    <location>
        <begin position="509"/>
        <end position="531"/>
    </location>
</feature>
<feature type="zinc finger region" description="C2H2-type 11" evidence="2">
    <location>
        <begin position="537"/>
        <end position="559"/>
    </location>
</feature>
<feature type="zinc finger region" description="C2H2-type 12" evidence="2">
    <location>
        <begin position="565"/>
        <end position="587"/>
    </location>
</feature>
<feature type="zinc finger region" description="C2H2-type 13" evidence="2">
    <location>
        <begin position="593"/>
        <end position="615"/>
    </location>
</feature>
<feature type="zinc finger region" description="C2H2-type 14" evidence="2">
    <location>
        <begin position="621"/>
        <end position="643"/>
    </location>
</feature>
<feature type="zinc finger region" description="C2H2-type 15" evidence="2">
    <location>
        <begin position="649"/>
        <end position="671"/>
    </location>
</feature>
<feature type="zinc finger region" description="C2H2-type 16" evidence="2">
    <location>
        <begin position="677"/>
        <end position="699"/>
    </location>
</feature>
<feature type="zinc finger region" description="C2H2-type 17" evidence="2">
    <location>
        <begin position="705"/>
        <end position="727"/>
    </location>
</feature>
<feature type="zinc finger region" description="C2H2-type 18" evidence="2">
    <location>
        <begin position="733"/>
        <end position="755"/>
    </location>
</feature>
<feature type="zinc finger region" description="C2H2-type 19" evidence="2">
    <location>
        <begin position="761"/>
        <end position="783"/>
    </location>
</feature>
<feature type="zinc finger region" description="C2H2-type 20" evidence="2">
    <location>
        <begin position="789"/>
        <end position="811"/>
    </location>
</feature>
<feature type="cross-link" description="Glycyl lysine isopeptide (Lys-Gly) (interchain with G-Cter in SUMO2)" evidence="1">
    <location>
        <position position="249"/>
    </location>
</feature>
<feature type="splice variant" id="VSP_055940" description="In isoform 2." evidence="6">
    <original>IPPKCTIKDLLPKEKSSTEAVFHTVVLERHESPDIEDFSFKEPQKNVHDFECQWRD</original>
    <variation>LLRRWKHWLLLLGICCPKPHGRVSSRLRLSRSLGHFFHSAFATFMGVCDKRVGSIF</variation>
    <location>
        <begin position="92"/>
        <end position="147"/>
    </location>
</feature>
<feature type="splice variant" id="VSP_055941" description="In isoform 2." evidence="6">
    <location>
        <begin position="148"/>
        <end position="818"/>
    </location>
</feature>
<feature type="sequence variant" id="VAR_057400" description="In dbSNP:rs329709.">
    <original>R</original>
    <variation>Q</variation>
    <location>
        <position position="7"/>
    </location>
</feature>
<feature type="sequence variant" id="VAR_060274" description="In dbSNP:rs8105668." evidence="4 5">
    <original>P</original>
    <variation>R</variation>
    <location>
        <position position="82"/>
    </location>
</feature>
<proteinExistence type="evidence at protein level"/>
<evidence type="ECO:0000250" key="1">
    <source>
        <dbReference type="UniProtKB" id="Q6ZN19"/>
    </source>
</evidence>
<evidence type="ECO:0000255" key="2">
    <source>
        <dbReference type="PROSITE-ProRule" id="PRU00042"/>
    </source>
</evidence>
<evidence type="ECO:0000255" key="3">
    <source>
        <dbReference type="PROSITE-ProRule" id="PRU00119"/>
    </source>
</evidence>
<evidence type="ECO:0000269" key="4">
    <source>
    </source>
</evidence>
<evidence type="ECO:0000269" key="5">
    <source>
    </source>
</evidence>
<evidence type="ECO:0000303" key="6">
    <source>
    </source>
</evidence>
<evidence type="ECO:0000305" key="7"/>
<dbReference type="EMBL" id="AC010328">
    <property type="status" value="NOT_ANNOTATED_CDS"/>
    <property type="molecule type" value="Genomic_DNA"/>
</dbReference>
<dbReference type="EMBL" id="CH471135">
    <property type="protein sequence ID" value="EAW72110.1"/>
    <property type="molecule type" value="Genomic_DNA"/>
</dbReference>
<dbReference type="EMBL" id="BC000807">
    <property type="protein sequence ID" value="AAH00807.1"/>
    <property type="molecule type" value="mRNA"/>
</dbReference>
<dbReference type="EMBL" id="BC094880">
    <property type="protein sequence ID" value="AAH94880.1"/>
    <property type="molecule type" value="mRNA"/>
</dbReference>
<dbReference type="EMBL" id="AF277623">
    <property type="protein sequence ID" value="AAK61306.1"/>
    <property type="molecule type" value="mRNA"/>
</dbReference>
<dbReference type="EMBL" id="AB046831">
    <property type="protein sequence ID" value="BAB13437.1"/>
    <property type="molecule type" value="mRNA"/>
</dbReference>
<dbReference type="EMBL" id="AK024442">
    <property type="protein sequence ID" value="BAB15732.1"/>
    <property type="molecule type" value="mRNA"/>
</dbReference>
<dbReference type="EMBL" id="X78928">
    <property type="protein sequence ID" value="CAA55528.1"/>
    <property type="status" value="ALT_SEQ"/>
    <property type="molecule type" value="mRNA"/>
</dbReference>
<dbReference type="CCDS" id="CCDS12859.1">
    <molecule id="Q9HCG1-1"/>
</dbReference>
<dbReference type="CCDS" id="CCDS82392.1">
    <molecule id="Q9HCG1-2"/>
</dbReference>
<dbReference type="PIR" id="S47066">
    <property type="entry name" value="S47066"/>
</dbReference>
<dbReference type="RefSeq" id="NP_001096073.1">
    <molecule id="Q9HCG1-1"/>
    <property type="nucleotide sequence ID" value="NM_001102603.2"/>
</dbReference>
<dbReference type="RefSeq" id="NP_001309054.1">
    <molecule id="Q9HCG1-2"/>
    <property type="nucleotide sequence ID" value="NM_001322125.2"/>
</dbReference>
<dbReference type="RefSeq" id="NP_001309055.1">
    <molecule id="Q9HCG1-2"/>
    <property type="nucleotide sequence ID" value="NM_001322126.2"/>
</dbReference>
<dbReference type="RefSeq" id="NP_001309057.1">
    <molecule id="Q9HCG1-1"/>
    <property type="nucleotide sequence ID" value="NM_001322128.2"/>
</dbReference>
<dbReference type="RefSeq" id="NP_001309058.1">
    <molecule id="Q9HCG1-1"/>
    <property type="nucleotide sequence ID" value="NM_001322129.2"/>
</dbReference>
<dbReference type="RefSeq" id="NP_001309059.1">
    <molecule id="Q9HCG1-1"/>
    <property type="nucleotide sequence ID" value="NM_001322130.2"/>
</dbReference>
<dbReference type="RefSeq" id="NP_001309060.1">
    <molecule id="Q9HCG1-1"/>
    <property type="nucleotide sequence ID" value="NM_001322131.2"/>
</dbReference>
<dbReference type="RefSeq" id="NP_001309061.1">
    <molecule id="Q9HCG1-1"/>
    <property type="nucleotide sequence ID" value="NM_001322132.2"/>
</dbReference>
<dbReference type="RefSeq" id="NP_001309062.1">
    <molecule id="Q9HCG1-1"/>
    <property type="nucleotide sequence ID" value="NM_001322133.2"/>
</dbReference>
<dbReference type="RefSeq" id="NP_001309063.1">
    <molecule id="Q9HCG1-1"/>
    <property type="nucleotide sequence ID" value="NM_001322134.2"/>
</dbReference>
<dbReference type="RefSeq" id="NP_001309064.1">
    <molecule id="Q9HCG1-1"/>
    <property type="nucleotide sequence ID" value="NM_001322135.2"/>
</dbReference>
<dbReference type="RefSeq" id="NP_001309065.1">
    <molecule id="Q9HCG1-1"/>
    <property type="nucleotide sequence ID" value="NM_001322136.1"/>
</dbReference>
<dbReference type="RefSeq" id="NP_150630.2">
    <molecule id="Q9HCG1-1"/>
    <property type="nucleotide sequence ID" value="NM_033288.3"/>
</dbReference>
<dbReference type="RefSeq" id="NP_942596.1">
    <molecule id="Q9HCG1-1"/>
    <property type="nucleotide sequence ID" value="NM_198893.3"/>
</dbReference>
<dbReference type="RefSeq" id="XP_016882935.1">
    <property type="nucleotide sequence ID" value="XM_017027446.1"/>
</dbReference>
<dbReference type="RefSeq" id="XP_016882937.1">
    <molecule id="Q9HCG1-2"/>
    <property type="nucleotide sequence ID" value="XM_017027448.3"/>
</dbReference>
<dbReference type="RefSeq" id="XP_047295572.1">
    <molecule id="Q9HCG1-1"/>
    <property type="nucleotide sequence ID" value="XM_047439616.1"/>
</dbReference>
<dbReference type="RefSeq" id="XP_047295574.1">
    <molecule id="Q9HCG1-1"/>
    <property type="nucleotide sequence ID" value="XM_047439618.1"/>
</dbReference>
<dbReference type="RefSeq" id="XP_047295575.1">
    <molecule id="Q9HCG1-1"/>
    <property type="nucleotide sequence ID" value="XM_047439619.1"/>
</dbReference>
<dbReference type="RefSeq" id="XP_047295576.1">
    <molecule id="Q9HCG1-1"/>
    <property type="nucleotide sequence ID" value="XM_047439620.1"/>
</dbReference>
<dbReference type="RefSeq" id="XP_047295577.1">
    <molecule id="Q9HCG1-1"/>
    <property type="nucleotide sequence ID" value="XM_047439621.1"/>
</dbReference>
<dbReference type="RefSeq" id="XP_047295578.1">
    <molecule id="Q9HCG1-1"/>
    <property type="nucleotide sequence ID" value="XM_047439622.1"/>
</dbReference>
<dbReference type="RefSeq" id="XP_047295579.1">
    <molecule id="Q9HCG1-1"/>
    <property type="nucleotide sequence ID" value="XM_047439623.1"/>
</dbReference>
<dbReference type="RefSeq" id="XP_047295599.1">
    <molecule id="Q9HCG1-2"/>
    <property type="nucleotide sequence ID" value="XM_047439643.1"/>
</dbReference>
<dbReference type="RefSeq" id="XP_047295600.1">
    <molecule id="Q9HCG1-2"/>
    <property type="nucleotide sequence ID" value="XM_047439644.1"/>
</dbReference>
<dbReference type="RefSeq" id="XP_047295601.1">
    <molecule id="Q9HCG1-2"/>
    <property type="nucleotide sequence ID" value="XM_047439645.1"/>
</dbReference>
<dbReference type="RefSeq" id="XP_047295602.1">
    <molecule id="Q9HCG1-2"/>
    <property type="nucleotide sequence ID" value="XM_047439646.1"/>
</dbReference>
<dbReference type="SMR" id="Q9HCG1"/>
<dbReference type="BioGRID" id="124698">
    <property type="interactions" value="9"/>
</dbReference>
<dbReference type="FunCoup" id="Q9HCG1">
    <property type="interactions" value="64"/>
</dbReference>
<dbReference type="IntAct" id="Q9HCG1">
    <property type="interactions" value="9"/>
</dbReference>
<dbReference type="STRING" id="9606.ENSP00000406201"/>
<dbReference type="GlyGen" id="Q9HCG1">
    <property type="glycosylation" value="1 site, 1 O-linked glycan (1 site)"/>
</dbReference>
<dbReference type="iPTMnet" id="Q9HCG1"/>
<dbReference type="PhosphoSitePlus" id="Q9HCG1"/>
<dbReference type="BioMuta" id="ZNF160"/>
<dbReference type="DMDM" id="296453072"/>
<dbReference type="jPOST" id="Q9HCG1"/>
<dbReference type="MassIVE" id="Q9HCG1"/>
<dbReference type="PaxDb" id="9606-ENSP00000406201"/>
<dbReference type="PeptideAtlas" id="Q9HCG1"/>
<dbReference type="ProteomicsDB" id="79244"/>
<dbReference type="ProteomicsDB" id="81708">
    <molecule id="Q9HCG1-1"/>
</dbReference>
<dbReference type="Antibodypedia" id="19144">
    <property type="antibodies" value="74 antibodies from 17 providers"/>
</dbReference>
<dbReference type="DNASU" id="90338"/>
<dbReference type="Ensembl" id="ENST00000355147.9">
    <molecule id="Q9HCG1-2"/>
    <property type="protein sequence ID" value="ENSP00000347273.4"/>
    <property type="gene ID" value="ENSG00000170949.18"/>
</dbReference>
<dbReference type="Ensembl" id="ENST00000418871.5">
    <molecule id="Q9HCG1-1"/>
    <property type="protein sequence ID" value="ENSP00000409597.1"/>
    <property type="gene ID" value="ENSG00000170949.18"/>
</dbReference>
<dbReference type="Ensembl" id="ENST00000429604.5">
    <molecule id="Q9HCG1-1"/>
    <property type="protein sequence ID" value="ENSP00000406201.1"/>
    <property type="gene ID" value="ENSG00000170949.18"/>
</dbReference>
<dbReference type="Ensembl" id="ENST00000599056.5">
    <molecule id="Q9HCG1-1"/>
    <property type="protein sequence ID" value="ENSP00000470961.1"/>
    <property type="gene ID" value="ENSG00000170949.18"/>
</dbReference>
<dbReference type="Ensembl" id="ENST00000683776.1">
    <molecule id="Q9HCG1-1"/>
    <property type="protein sequence ID" value="ENSP00000507845.1"/>
    <property type="gene ID" value="ENSG00000170949.18"/>
</dbReference>
<dbReference type="GeneID" id="90338"/>
<dbReference type="KEGG" id="hsa:90338"/>
<dbReference type="MANE-Select" id="ENST00000683776.1">
    <property type="protein sequence ID" value="ENSP00000507845.1"/>
    <property type="RefSeq nucleotide sequence ID" value="NM_001322131.2"/>
    <property type="RefSeq protein sequence ID" value="NP_001309060.1"/>
</dbReference>
<dbReference type="UCSC" id="uc002qaq.5">
    <molecule id="Q9HCG1-1"/>
    <property type="organism name" value="human"/>
</dbReference>
<dbReference type="AGR" id="HGNC:12948"/>
<dbReference type="CTD" id="90338"/>
<dbReference type="DisGeNET" id="90338"/>
<dbReference type="GeneCards" id="ZNF160"/>
<dbReference type="HGNC" id="HGNC:12948">
    <property type="gene designation" value="ZNF160"/>
</dbReference>
<dbReference type="HPA" id="ENSG00000170949">
    <property type="expression patterns" value="Low tissue specificity"/>
</dbReference>
<dbReference type="MIM" id="600398">
    <property type="type" value="gene"/>
</dbReference>
<dbReference type="neXtProt" id="NX_Q9HCG1"/>
<dbReference type="OpenTargets" id="ENSG00000170949"/>
<dbReference type="PharmGKB" id="PA37531"/>
<dbReference type="VEuPathDB" id="HostDB:ENSG00000170949"/>
<dbReference type="eggNOG" id="KOG1721">
    <property type="taxonomic scope" value="Eukaryota"/>
</dbReference>
<dbReference type="GeneTree" id="ENSGT00940000162609"/>
<dbReference type="HOGENOM" id="CLU_002678_17_1_1"/>
<dbReference type="InParanoid" id="Q9HCG1"/>
<dbReference type="OMA" id="KTHISHE"/>
<dbReference type="OrthoDB" id="9411774at2759"/>
<dbReference type="PAN-GO" id="Q9HCG1">
    <property type="GO annotations" value="4 GO annotations based on evolutionary models"/>
</dbReference>
<dbReference type="PhylomeDB" id="Q9HCG1"/>
<dbReference type="TreeFam" id="TF341892"/>
<dbReference type="PathwayCommons" id="Q9HCG1"/>
<dbReference type="Reactome" id="R-HSA-212436">
    <property type="pathway name" value="Generic Transcription Pathway"/>
</dbReference>
<dbReference type="SignaLink" id="Q9HCG1"/>
<dbReference type="BioGRID-ORCS" id="90338">
    <property type="hits" value="9 hits in 1180 CRISPR screens"/>
</dbReference>
<dbReference type="ChiTaRS" id="ZNF160">
    <property type="organism name" value="human"/>
</dbReference>
<dbReference type="GeneWiki" id="ZNF160"/>
<dbReference type="GenomeRNAi" id="90338"/>
<dbReference type="Pharos" id="Q9HCG1">
    <property type="development level" value="Tbio"/>
</dbReference>
<dbReference type="PRO" id="PR:Q9HCG1"/>
<dbReference type="Proteomes" id="UP000005640">
    <property type="component" value="Chromosome 19"/>
</dbReference>
<dbReference type="RNAct" id="Q9HCG1">
    <property type="molecule type" value="protein"/>
</dbReference>
<dbReference type="Bgee" id="ENSG00000170949">
    <property type="expression patterns" value="Expressed in renal medulla and 215 other cell types or tissues"/>
</dbReference>
<dbReference type="ExpressionAtlas" id="Q9HCG1">
    <property type="expression patterns" value="baseline and differential"/>
</dbReference>
<dbReference type="GO" id="GO:0005634">
    <property type="term" value="C:nucleus"/>
    <property type="evidence" value="ECO:0000318"/>
    <property type="project" value="GO_Central"/>
</dbReference>
<dbReference type="GO" id="GO:0000981">
    <property type="term" value="F:DNA-binding transcription factor activity, RNA polymerase II-specific"/>
    <property type="evidence" value="ECO:0000318"/>
    <property type="project" value="GO_Central"/>
</dbReference>
<dbReference type="GO" id="GO:0000978">
    <property type="term" value="F:RNA polymerase II cis-regulatory region sequence-specific DNA binding"/>
    <property type="evidence" value="ECO:0000318"/>
    <property type="project" value="GO_Central"/>
</dbReference>
<dbReference type="GO" id="GO:0008270">
    <property type="term" value="F:zinc ion binding"/>
    <property type="evidence" value="ECO:0007669"/>
    <property type="project" value="UniProtKB-KW"/>
</dbReference>
<dbReference type="GO" id="GO:0030097">
    <property type="term" value="P:hemopoiesis"/>
    <property type="evidence" value="ECO:0000303"/>
    <property type="project" value="UniProtKB"/>
</dbReference>
<dbReference type="GO" id="GO:0006357">
    <property type="term" value="P:regulation of transcription by RNA polymerase II"/>
    <property type="evidence" value="ECO:0000318"/>
    <property type="project" value="GO_Central"/>
</dbReference>
<dbReference type="CDD" id="cd07765">
    <property type="entry name" value="KRAB_A-box"/>
    <property type="match status" value="1"/>
</dbReference>
<dbReference type="FunFam" id="3.30.160.60:FF:004137">
    <property type="match status" value="4"/>
</dbReference>
<dbReference type="FunFam" id="3.30.160.60:FF:002026">
    <property type="entry name" value="Zinc finger protein 160"/>
    <property type="match status" value="1"/>
</dbReference>
<dbReference type="FunFam" id="3.30.160.60:FF:002278">
    <property type="entry name" value="Zinc finger protein 320"/>
    <property type="match status" value="2"/>
</dbReference>
<dbReference type="FunFam" id="3.30.160.60:FF:002343">
    <property type="entry name" value="Zinc finger protein 33A"/>
    <property type="match status" value="2"/>
</dbReference>
<dbReference type="FunFam" id="3.30.160.60:FF:000133">
    <property type="entry name" value="Zinc finger protein 347"/>
    <property type="match status" value="6"/>
</dbReference>
<dbReference type="FunFam" id="3.30.160.60:FF:002402">
    <property type="entry name" value="Zinc finger protein 347"/>
    <property type="match status" value="2"/>
</dbReference>
<dbReference type="FunFam" id="3.30.160.60:FF:000016">
    <property type="entry name" value="zinc finger protein 37 homolog"/>
    <property type="match status" value="1"/>
</dbReference>
<dbReference type="FunFam" id="3.30.160.60:FF:002254">
    <property type="entry name" value="Zinc finger protein 540"/>
    <property type="match status" value="1"/>
</dbReference>
<dbReference type="FunFam" id="3.30.160.60:FF:000197">
    <property type="entry name" value="Zinc finger protein 606"/>
    <property type="match status" value="3"/>
</dbReference>
<dbReference type="FunFam" id="3.30.160.60:FF:000292">
    <property type="entry name" value="zinc finger protein 619"/>
    <property type="match status" value="1"/>
</dbReference>
<dbReference type="FunFam" id="3.30.160.60:FF:001700">
    <property type="entry name" value="Zinc finger protein 677"/>
    <property type="match status" value="1"/>
</dbReference>
<dbReference type="Gene3D" id="6.10.140.140">
    <property type="match status" value="1"/>
</dbReference>
<dbReference type="Gene3D" id="3.30.160.60">
    <property type="entry name" value="Classic Zinc Finger"/>
    <property type="match status" value="20"/>
</dbReference>
<dbReference type="InterPro" id="IPR001909">
    <property type="entry name" value="KRAB"/>
</dbReference>
<dbReference type="InterPro" id="IPR036051">
    <property type="entry name" value="KRAB_dom_sf"/>
</dbReference>
<dbReference type="InterPro" id="IPR050527">
    <property type="entry name" value="Snail/Krueppel_Znf"/>
</dbReference>
<dbReference type="InterPro" id="IPR036236">
    <property type="entry name" value="Znf_C2H2_sf"/>
</dbReference>
<dbReference type="InterPro" id="IPR013087">
    <property type="entry name" value="Znf_C2H2_type"/>
</dbReference>
<dbReference type="PANTHER" id="PTHR24388:SF96">
    <property type="entry name" value="GENE, 32687-RELATED"/>
    <property type="match status" value="1"/>
</dbReference>
<dbReference type="PANTHER" id="PTHR24388">
    <property type="entry name" value="ZINC FINGER PROTEIN"/>
    <property type="match status" value="1"/>
</dbReference>
<dbReference type="Pfam" id="PF01352">
    <property type="entry name" value="KRAB"/>
    <property type="match status" value="1"/>
</dbReference>
<dbReference type="Pfam" id="PF00096">
    <property type="entry name" value="zf-C2H2"/>
    <property type="match status" value="20"/>
</dbReference>
<dbReference type="SMART" id="SM00349">
    <property type="entry name" value="KRAB"/>
    <property type="match status" value="1"/>
</dbReference>
<dbReference type="SMART" id="SM00355">
    <property type="entry name" value="ZnF_C2H2"/>
    <property type="match status" value="20"/>
</dbReference>
<dbReference type="SUPFAM" id="SSF57667">
    <property type="entry name" value="beta-beta-alpha zinc fingers"/>
    <property type="match status" value="12"/>
</dbReference>
<dbReference type="SUPFAM" id="SSF109640">
    <property type="entry name" value="KRAB domain (Kruppel-associated box)"/>
    <property type="match status" value="1"/>
</dbReference>
<dbReference type="PROSITE" id="PS50805">
    <property type="entry name" value="KRAB"/>
    <property type="match status" value="1"/>
</dbReference>
<dbReference type="PROSITE" id="PS00028">
    <property type="entry name" value="ZINC_FINGER_C2H2_1"/>
    <property type="match status" value="20"/>
</dbReference>
<dbReference type="PROSITE" id="PS50157">
    <property type="entry name" value="ZINC_FINGER_C2H2_2"/>
    <property type="match status" value="20"/>
</dbReference>
<reference key="1">
    <citation type="journal article" date="2004" name="Nature">
        <title>The DNA sequence and biology of human chromosome 19.</title>
        <authorList>
            <person name="Grimwood J."/>
            <person name="Gordon L.A."/>
            <person name="Olsen A.S."/>
            <person name="Terry A."/>
            <person name="Schmutz J."/>
            <person name="Lamerdin J.E."/>
            <person name="Hellsten U."/>
            <person name="Goodstein D."/>
            <person name="Couronne O."/>
            <person name="Tran-Gyamfi M."/>
            <person name="Aerts A."/>
            <person name="Altherr M."/>
            <person name="Ashworth L."/>
            <person name="Bajorek E."/>
            <person name="Black S."/>
            <person name="Branscomb E."/>
            <person name="Caenepeel S."/>
            <person name="Carrano A.V."/>
            <person name="Caoile C."/>
            <person name="Chan Y.M."/>
            <person name="Christensen M."/>
            <person name="Cleland C.A."/>
            <person name="Copeland A."/>
            <person name="Dalin E."/>
            <person name="Dehal P."/>
            <person name="Denys M."/>
            <person name="Detter J.C."/>
            <person name="Escobar J."/>
            <person name="Flowers D."/>
            <person name="Fotopulos D."/>
            <person name="Garcia C."/>
            <person name="Georgescu A.M."/>
            <person name="Glavina T."/>
            <person name="Gomez M."/>
            <person name="Gonzales E."/>
            <person name="Groza M."/>
            <person name="Hammon N."/>
            <person name="Hawkins T."/>
            <person name="Haydu L."/>
            <person name="Ho I."/>
            <person name="Huang W."/>
            <person name="Israni S."/>
            <person name="Jett J."/>
            <person name="Kadner K."/>
            <person name="Kimball H."/>
            <person name="Kobayashi A."/>
            <person name="Larionov V."/>
            <person name="Leem S.-H."/>
            <person name="Lopez F."/>
            <person name="Lou Y."/>
            <person name="Lowry S."/>
            <person name="Malfatti S."/>
            <person name="Martinez D."/>
            <person name="McCready P.M."/>
            <person name="Medina C."/>
            <person name="Morgan J."/>
            <person name="Nelson K."/>
            <person name="Nolan M."/>
            <person name="Ovcharenko I."/>
            <person name="Pitluck S."/>
            <person name="Pollard M."/>
            <person name="Popkie A.P."/>
            <person name="Predki P."/>
            <person name="Quan G."/>
            <person name="Ramirez L."/>
            <person name="Rash S."/>
            <person name="Retterer J."/>
            <person name="Rodriguez A."/>
            <person name="Rogers S."/>
            <person name="Salamov A."/>
            <person name="Salazar A."/>
            <person name="She X."/>
            <person name="Smith D."/>
            <person name="Slezak T."/>
            <person name="Solovyev V."/>
            <person name="Thayer N."/>
            <person name="Tice H."/>
            <person name="Tsai M."/>
            <person name="Ustaszewska A."/>
            <person name="Vo N."/>
            <person name="Wagner M."/>
            <person name="Wheeler J."/>
            <person name="Wu K."/>
            <person name="Xie G."/>
            <person name="Yang J."/>
            <person name="Dubchak I."/>
            <person name="Furey T.S."/>
            <person name="DeJong P."/>
            <person name="Dickson M."/>
            <person name="Gordon D."/>
            <person name="Eichler E.E."/>
            <person name="Pennacchio L.A."/>
            <person name="Richardson P."/>
            <person name="Stubbs L."/>
            <person name="Rokhsar D.S."/>
            <person name="Myers R.M."/>
            <person name="Rubin E.M."/>
            <person name="Lucas S.M."/>
        </authorList>
    </citation>
    <scope>NUCLEOTIDE SEQUENCE [LARGE SCALE GENOMIC DNA]</scope>
</reference>
<reference key="2">
    <citation type="submission" date="2005-07" db="EMBL/GenBank/DDBJ databases">
        <authorList>
            <person name="Mural R.J."/>
            <person name="Istrail S."/>
            <person name="Sutton G."/>
            <person name="Florea L."/>
            <person name="Halpern A.L."/>
            <person name="Mobarry C.M."/>
            <person name="Lippert R."/>
            <person name="Walenz B."/>
            <person name="Shatkay H."/>
            <person name="Dew I."/>
            <person name="Miller J.R."/>
            <person name="Flanigan M.J."/>
            <person name="Edwards N.J."/>
            <person name="Bolanos R."/>
            <person name="Fasulo D."/>
            <person name="Halldorsson B.V."/>
            <person name="Hannenhalli S."/>
            <person name="Turner R."/>
            <person name="Yooseph S."/>
            <person name="Lu F."/>
            <person name="Nusskern D.R."/>
            <person name="Shue B.C."/>
            <person name="Zheng X.H."/>
            <person name="Zhong F."/>
            <person name="Delcher A.L."/>
            <person name="Huson D.H."/>
            <person name="Kravitz S.A."/>
            <person name="Mouchard L."/>
            <person name="Reinert K."/>
            <person name="Remington K.A."/>
            <person name="Clark A.G."/>
            <person name="Waterman M.S."/>
            <person name="Eichler E.E."/>
            <person name="Adams M.D."/>
            <person name="Hunkapiller M.W."/>
            <person name="Myers E.W."/>
            <person name="Venter J.C."/>
        </authorList>
    </citation>
    <scope>NUCLEOTIDE SEQUENCE [LARGE SCALE GENOMIC DNA]</scope>
</reference>
<reference key="3">
    <citation type="journal article" date="2004" name="Genome Res.">
        <title>The status, quality, and expansion of the NIH full-length cDNA project: the Mammalian Gene Collection (MGC).</title>
        <authorList>
            <consortium name="The MGC Project Team"/>
        </authorList>
    </citation>
    <scope>NUCLEOTIDE SEQUENCE [LARGE SCALE MRNA] (ISOFORMS 1 AND 2)</scope>
    <source>
        <tissue>Lymph</tissue>
        <tissue>Placenta</tissue>
    </source>
</reference>
<reference key="4">
    <citation type="journal article" date="2001" name="DNA Cell Biol.">
        <title>Molecular cloning and preliminary functional analysis of two novel human KRAB zinc finger proteins, HKr18 and HKr19.</title>
        <authorList>
            <person name="Mark C."/>
            <person name="Looman C."/>
            <person name="Abrink M."/>
            <person name="Hellman L."/>
        </authorList>
    </citation>
    <scope>NUCLEOTIDE SEQUENCE [MRNA] OF 1-556 (ISOFORM 1)</scope>
    <scope>TISSUE SPECIFICITY</scope>
    <scope>VARIANT ARG-82</scope>
    <source>
        <tissue>Testis</tissue>
    </source>
</reference>
<reference key="5">
    <citation type="journal article" date="2000" name="DNA Res.">
        <title>Prediction of the coding sequences of unidentified human genes. XVIII. The complete sequences of 100 new cDNA clones from brain which code for large proteins in vitro.</title>
        <authorList>
            <person name="Nagase T."/>
            <person name="Kikuno R."/>
            <person name="Nakayama M."/>
            <person name="Hirosawa M."/>
            <person name="Ohara O."/>
        </authorList>
    </citation>
    <scope>NUCLEOTIDE SEQUENCE [LARGE SCALE MRNA] OF 6-818 (ISOFORM 1)</scope>
    <scope>VARIANT ARG-82</scope>
    <source>
        <tissue>Brain</tissue>
    </source>
</reference>
<reference key="6">
    <citation type="journal article" date="2000" name="DNA Res.">
        <title>Characterization of long cDNA clones from human adult spleen.</title>
        <authorList>
            <person name="Hattori A."/>
            <person name="Okumura K."/>
            <person name="Nagase T."/>
            <person name="Kikuno R."/>
            <person name="Hirosawa M."/>
            <person name="Ohara O."/>
        </authorList>
    </citation>
    <scope>NUCLEOTIDE SEQUENCE [LARGE SCALE MRNA] OF 114-818 (ISOFORM 1)</scope>
    <source>
        <tissue>Spleen</tissue>
    </source>
</reference>
<reference key="7">
    <citation type="journal article" date="1995" name="DNA Cell Biol.">
        <title>Isolation of cDNA clones for 42 different Kruppel-related zinc finger proteins expressed in the human monoblast cell line U-937.</title>
        <authorList>
            <person name="Abrink M."/>
            <person name="Aveskogh M."/>
            <person name="Hellman L."/>
        </authorList>
    </citation>
    <scope>NUCLEOTIDE SEQUENCE [MRNA] OF 685-818 (ISOFORM 1)</scope>
</reference>
<accession>Q9HCG1</accession>
<accession>Q14589</accession>
<accession>Q504Q8</accession>
<accession>Q96JC5</accession>
<accession>Q9BVY9</accession>
<accession>Q9H7N6</accession>
<organism>
    <name type="scientific">Homo sapiens</name>
    <name type="common">Human</name>
    <dbReference type="NCBI Taxonomy" id="9606"/>
    <lineage>
        <taxon>Eukaryota</taxon>
        <taxon>Metazoa</taxon>
        <taxon>Chordata</taxon>
        <taxon>Craniata</taxon>
        <taxon>Vertebrata</taxon>
        <taxon>Euteleostomi</taxon>
        <taxon>Mammalia</taxon>
        <taxon>Eutheria</taxon>
        <taxon>Euarchontoglires</taxon>
        <taxon>Primates</taxon>
        <taxon>Haplorrhini</taxon>
        <taxon>Catarrhini</taxon>
        <taxon>Hominidae</taxon>
        <taxon>Homo</taxon>
    </lineage>
</organism>
<protein>
    <recommendedName>
        <fullName>Zinc finger protein 160</fullName>
    </recommendedName>
    <alternativeName>
        <fullName>Zinc finger protein HZF5</fullName>
    </alternativeName>
    <alternativeName>
        <fullName>Zinc finger protein Kr18</fullName>
        <shortName>HKr18</shortName>
    </alternativeName>
</protein>
<comment type="function">
    <text>May be involved in transcriptional regulation.</text>
</comment>
<comment type="subcellular location">
    <subcellularLocation>
        <location evidence="7">Nucleus</location>
    </subcellularLocation>
</comment>
<comment type="alternative products">
    <event type="alternative splicing"/>
    <isoform>
        <id>Q9HCG1-1</id>
        <name>1</name>
        <sequence type="displayed"/>
    </isoform>
    <isoform>
        <id>Q9HCG1-2</id>
        <name>2</name>
        <sequence type="described" ref="VSP_055940 VSP_055941"/>
    </isoform>
</comment>
<comment type="tissue specificity">
    <text evidence="5">Ubiquitous.</text>
</comment>
<comment type="similarity">
    <text evidence="7">Belongs to the krueppel C2H2-type zinc-finger protein family.</text>
</comment>
<comment type="sequence caution" evidence="7">
    <conflict type="miscellaneous discrepancy">
        <sequence resource="EMBL-CDS" id="CAA55528"/>
    </conflict>
    <text>Dubious alternative splicing.</text>
</comment>
<name>ZN160_HUMAN</name>
<sequence>MALTQVRLTFRDVAIEFSQEEWKCLDPAQRILYRDVMLENYWNLVSLGLCHFDMNIISMLEEGKEPWTVKSCVKIARKPRTPECVKGVVTDIPPKCTIKDLLPKEKSSTEAVFHTVVLERHESPDIEDFSFKEPQKNVHDFECQWRDDTGNYKGVLMAQKEGKRDQRDRRDIENKLMNNQLGVSFHSHLPELQLFQGEGKMYECNQVEKSTNNGSSVSPLQQIPSSVQTHRSKKYHELNHFSLLTQRRKANSCGKPYKCNECGKAFTQNSNLTSHRRIHSGEKPYKCSECGKTFTVRSNLTIHQVIHTGEKPYKCHECGKVFRHNSYLATHRRIHTGEKPYKCNECGKAFRGHSNLTTHQLIHTGEKPFKCNECGKLFTQNSHLISHWRIHTGEKPYKCNECGKAFSVRSSLAIHQTIHTGEKPYKCNECGKVFRYNSYLGRHRRVHTGEKPYKCNECGKAFSMHSNLATHQVIHTGTKPFKCNECSKVFTQNSQLANHRRIHTGEKPYKCNECGKAFSVRSSLTTHQAIHSGEKPYKCIECGKSFTQKSHLRSHRGIHSGEKPYKCNECGKVFAQTSQLARHWRVHTGEKPYKCNDCGRAFSDRSSLTFHQAIHTGEKPYKCHECGKVFRHNSYLATHRRIHTGEKPYKCNECGKAFSMHSNLTTHKVIHTGEKPYKCNQCGKVFTQNSHLANHQRTHTGEKPYRCNECGKAFSVRSSLTTHQAIHTGKKPYKCNECGKVFTQNAHLANHRRIHTGEKPYRCTECGKAFRVRSSLTTHMAIHTGEKRYKCNECGKVFRQSSNLASHHRMHTGEKPYK</sequence>